<name>IOD2_PETMA</name>
<dbReference type="EC" id="1.21.99.4" evidence="2"/>
<dbReference type="EMBL" id="KC306946">
    <property type="protein sequence ID" value="AGC79960.1"/>
    <property type="molecule type" value="mRNA"/>
</dbReference>
<dbReference type="Proteomes" id="UP001318040">
    <property type="component" value="Unplaced"/>
</dbReference>
<dbReference type="GO" id="GO:0005789">
    <property type="term" value="C:endoplasmic reticulum membrane"/>
    <property type="evidence" value="ECO:0000250"/>
    <property type="project" value="UniProtKB"/>
</dbReference>
<dbReference type="GO" id="GO:0004800">
    <property type="term" value="F:thyroxine 5'-deiodinase activity"/>
    <property type="evidence" value="ECO:0007669"/>
    <property type="project" value="UniProtKB-EC"/>
</dbReference>
<dbReference type="GO" id="GO:0042446">
    <property type="term" value="P:hormone biosynthetic process"/>
    <property type="evidence" value="ECO:0007669"/>
    <property type="project" value="UniProtKB-KW"/>
</dbReference>
<dbReference type="GO" id="GO:0042403">
    <property type="term" value="P:thyroid hormone metabolic process"/>
    <property type="evidence" value="ECO:0007669"/>
    <property type="project" value="TreeGrafter"/>
</dbReference>
<dbReference type="Gene3D" id="3.40.30.10">
    <property type="entry name" value="Glutaredoxin"/>
    <property type="match status" value="1"/>
</dbReference>
<dbReference type="InterPro" id="IPR000643">
    <property type="entry name" value="Iodothyronine_deiodinase"/>
</dbReference>
<dbReference type="InterPro" id="IPR008261">
    <property type="entry name" value="Iodothyronine_deiodinase_AS"/>
</dbReference>
<dbReference type="PANTHER" id="PTHR11781">
    <property type="entry name" value="IODOTHYRONINE DEIODINASE"/>
    <property type="match status" value="1"/>
</dbReference>
<dbReference type="PANTHER" id="PTHR11781:SF20">
    <property type="entry name" value="TYPE II IODOTHYRONINE DEIODINASE"/>
    <property type="match status" value="1"/>
</dbReference>
<dbReference type="Pfam" id="PF00837">
    <property type="entry name" value="T4_deiodinase"/>
    <property type="match status" value="1"/>
</dbReference>
<dbReference type="PIRSF" id="PIRSF001330">
    <property type="entry name" value="IOD"/>
    <property type="match status" value="1"/>
</dbReference>
<dbReference type="PROSITE" id="PS01205">
    <property type="entry name" value="T4_DEIODINASE"/>
    <property type="match status" value="1"/>
</dbReference>
<reference evidence="8 9" key="1">
    <citation type="journal article" date="2013" name="Gen. Comp. Endocrinol.">
        <title>Thyroid hormone deiodinase type 2 mRNA levels in sea lamprey (Petromyzon marinus) are regulated during metamorphosis and in response to a thyroid challenge.</title>
        <authorList>
            <person name="Stilborn S.S.M."/>
            <person name="Manzon L.A."/>
            <person name="Schauenberg J.D."/>
            <person name="Manzon R.G."/>
        </authorList>
    </citation>
    <scope>NUCLEOTIDE SEQUENCE [MRNA]</scope>
    <scope>TISSUE SPECIFICITY</scope>
    <scope>DEVELOPMENTAL STAGE</scope>
    <scope>INDUCTION</scope>
    <source>
        <tissue evidence="9">Intestine</tissue>
    </source>
</reference>
<accession>L7WGA7</accession>
<comment type="function">
    <text evidence="2 3">Plays a crucial role in the metabolism of thyroid hormones (TH) and has specific roles in TH activation and inactivation by deiodination (By similarity). Catalyzes the deiodination of L-thyroxine (T4) to 3,5,3'-triiodothyronine (T3), 3,3',5'-triiodothyronine (rT3) to 3,3'-diiodothyronine (3,3'-T2) and 3',5'-diiodothyronine (3',5'-T2) to 3'-monoiodothyronine (3'-T1) via outer-ring deiodination (ORD) (By similarity). Catalyzes the phenolic ring deiodinations of 3,3',5'-triiodothyronamine and 3',5'- diiodothyronamine (By similarity).</text>
</comment>
<comment type="catalytic activity">
    <reaction evidence="5">
        <text>3,3',5-triiodo-L-thyronine + iodide + A + H(+) = L-thyroxine + AH2</text>
        <dbReference type="Rhea" id="RHEA:19745"/>
        <dbReference type="ChEBI" id="CHEBI:13193"/>
        <dbReference type="ChEBI" id="CHEBI:15378"/>
        <dbReference type="ChEBI" id="CHEBI:16382"/>
        <dbReference type="ChEBI" id="CHEBI:17499"/>
        <dbReference type="ChEBI" id="CHEBI:58448"/>
        <dbReference type="ChEBI" id="CHEBI:533015"/>
        <dbReference type="EC" id="1.21.99.4"/>
    </reaction>
    <physiologicalReaction direction="right-to-left" evidence="2">
        <dbReference type="Rhea" id="RHEA:19747"/>
    </physiologicalReaction>
</comment>
<comment type="catalytic activity">
    <reaction evidence="3">
        <text>3,3'-diiodo-L-thyronine + iodide + A + H(+) = 3,3',5'-triiodo-L-thyronine + AH2</text>
        <dbReference type="Rhea" id="RHEA:82575"/>
        <dbReference type="ChEBI" id="CHEBI:13193"/>
        <dbReference type="ChEBI" id="CHEBI:15378"/>
        <dbReference type="ChEBI" id="CHEBI:16382"/>
        <dbReference type="ChEBI" id="CHEBI:17499"/>
        <dbReference type="ChEBI" id="CHEBI:57261"/>
        <dbReference type="ChEBI" id="CHEBI:176514"/>
    </reaction>
    <physiologicalReaction direction="right-to-left" evidence="3">
        <dbReference type="Rhea" id="RHEA:82577"/>
    </physiologicalReaction>
</comment>
<comment type="catalytic activity">
    <reaction evidence="2">
        <text>3'-iodo-L-thyronine + iodide + A + H(+) = 3',5'-diiodo-L-thyronine + AH2</text>
        <dbReference type="Rhea" id="RHEA:82899"/>
        <dbReference type="ChEBI" id="CHEBI:13193"/>
        <dbReference type="ChEBI" id="CHEBI:15378"/>
        <dbReference type="ChEBI" id="CHEBI:16382"/>
        <dbReference type="ChEBI" id="CHEBI:17499"/>
        <dbReference type="ChEBI" id="CHEBI:195762"/>
        <dbReference type="ChEBI" id="CHEBI:232695"/>
    </reaction>
    <physiologicalReaction direction="right-to-left" evidence="2">
        <dbReference type="Rhea" id="RHEA:82901"/>
    </physiologicalReaction>
</comment>
<comment type="catalytic activity">
    <reaction evidence="2">
        <text>3,3'-diiodothyronamine + iodide + A + H(+) = 3,3',5'-triiodothyronamine + AH2</text>
        <dbReference type="Rhea" id="RHEA:83795"/>
        <dbReference type="ChEBI" id="CHEBI:13193"/>
        <dbReference type="ChEBI" id="CHEBI:15378"/>
        <dbReference type="ChEBI" id="CHEBI:16382"/>
        <dbReference type="ChEBI" id="CHEBI:17499"/>
        <dbReference type="ChEBI" id="CHEBI:233341"/>
        <dbReference type="ChEBI" id="CHEBI:233343"/>
    </reaction>
    <physiologicalReaction direction="right-to-left" evidence="2">
        <dbReference type="Rhea" id="RHEA:83797"/>
    </physiologicalReaction>
</comment>
<comment type="catalytic activity">
    <reaction evidence="2">
        <text>3'-iodothyronamine + iodide + A + H(+) = 3',5'-diiodothyronamine + AH2</text>
        <dbReference type="Rhea" id="RHEA:83803"/>
        <dbReference type="ChEBI" id="CHEBI:13193"/>
        <dbReference type="ChEBI" id="CHEBI:15378"/>
        <dbReference type="ChEBI" id="CHEBI:16382"/>
        <dbReference type="ChEBI" id="CHEBI:17499"/>
        <dbReference type="ChEBI" id="CHEBI:233339"/>
        <dbReference type="ChEBI" id="CHEBI:233342"/>
    </reaction>
    <physiologicalReaction direction="right-to-left" evidence="2">
        <dbReference type="Rhea" id="RHEA:83805"/>
    </physiologicalReaction>
</comment>
<comment type="subunit">
    <text evidence="2">Predominantly monomer. Can form homodimers but homodimerization is not essential for enzyme activity.</text>
</comment>
<comment type="subcellular location">
    <subcellularLocation>
        <location evidence="2">Endoplasmic reticulum membrane</location>
        <topology evidence="2">Single-pass type III membrane protein</topology>
    </subcellularLocation>
</comment>
<comment type="tissue specificity">
    <text evidence="7">Expressed in intestine, liver, kidney and brain of immediately premetamorphic larvae, of larvae in all stages of metamorphosis and of parasitic feeding juveniles. In immediately premetamorphic larvae, levels are significantly higher in intestine and liver than in kidney and brain.</text>
</comment>
<comment type="developmental stage">
    <text evidence="7">In the early developmental stages, elevated levels in intestine, liver and kidney, followed by decline through to stages 4 and 5 of metamorphosis. Levels are relatively stable in the brain during the same period.</text>
</comment>
<comment type="induction">
    <text evidence="7">Treatment of larvae with thyroid hormone T3 causes a significant decrease in intestinal levels. The thyroid hormone synthesis inhibitor potassium perchlorate (KClO4) significantly increases intestinal levels. Thyroid hormone T4 causes a decrease in intestine at day 3 of treatment but levels return to normal by day 6. Expression is significantly reduced in liver in response to all three treatments.</text>
</comment>
<comment type="similarity">
    <text evidence="4">Belongs to the iodothyronine deiodinase family.</text>
</comment>
<gene>
    <name evidence="2" type="primary">dio2</name>
</gene>
<organism>
    <name type="scientific">Petromyzon marinus</name>
    <name type="common">Sea lamprey</name>
    <dbReference type="NCBI Taxonomy" id="7757"/>
    <lineage>
        <taxon>Eukaryota</taxon>
        <taxon>Metazoa</taxon>
        <taxon>Chordata</taxon>
        <taxon>Craniata</taxon>
        <taxon>Vertebrata</taxon>
        <taxon>Cyclostomata</taxon>
        <taxon>Hyperoartia</taxon>
        <taxon>Petromyzontiformes</taxon>
        <taxon>Petromyzontidae</taxon>
        <taxon>Petromyzon</taxon>
    </lineage>
</organism>
<keyword id="KW-0256">Endoplasmic reticulum</keyword>
<keyword id="KW-0472">Membrane</keyword>
<keyword id="KW-0560">Oxidoreductase</keyword>
<keyword id="KW-0712">Selenocysteine</keyword>
<keyword id="KW-0893">Thyroid hormones biosynthesis</keyword>
<keyword id="KW-0812">Transmembrane</keyword>
<keyword id="KW-1133">Transmembrane helix</keyword>
<protein>
    <recommendedName>
        <fullName evidence="2">Type II iodothyronine deiodinase</fullName>
        <ecNumber evidence="2">1.21.99.4</ecNumber>
    </recommendedName>
    <alternativeName>
        <fullName evidence="2">5DII</fullName>
    </alternativeName>
    <alternativeName>
        <fullName evidence="2">DIOII</fullName>
    </alternativeName>
    <alternativeName>
        <fullName evidence="2">Type 2 DI</fullName>
    </alternativeName>
    <alternativeName>
        <fullName evidence="2">Type-II 5'-deiodinase</fullName>
    </alternativeName>
</protein>
<sequence length="288" mass="30946">MPHVNLLVVLLILPGVFSNCLFLALYDAVSFLRRALQASLTHSAKGDAQHPRMLTAQGMLSVWRSYVLDAHKKVRLGGKAPNSSVVALGGHSSSSPSFSCAASSSSSHETPTPRTTAEAAATVTTSTTTTSTTSSTAACRLLDFARAHRPLVVNFGSASUPPFVEQLGEFCDLVRDFAGVADFLVVYIEEAHPSDAWPAPGGLEVPRHLALGDRCVAASQLRGLMPPLGRCPVVADAMDNNANIDYGVSYERLYVIQDGRIRYLGGKGPFFYRVREVKSFLESVKASR</sequence>
<evidence type="ECO:0000250" key="1">
    <source>
        <dbReference type="UniProtKB" id="P55073"/>
    </source>
</evidence>
<evidence type="ECO:0000250" key="2">
    <source>
        <dbReference type="UniProtKB" id="Q92813"/>
    </source>
</evidence>
<evidence type="ECO:0000250" key="3">
    <source>
        <dbReference type="UniProtKB" id="Q9Z1Y9"/>
    </source>
</evidence>
<evidence type="ECO:0000255" key="4"/>
<evidence type="ECO:0000255" key="5">
    <source>
        <dbReference type="PROSITE-ProRule" id="PRU10107"/>
    </source>
</evidence>
<evidence type="ECO:0000256" key="6">
    <source>
        <dbReference type="SAM" id="MobiDB-lite"/>
    </source>
</evidence>
<evidence type="ECO:0000269" key="7">
    <source>
    </source>
</evidence>
<evidence type="ECO:0000305" key="8"/>
<evidence type="ECO:0000312" key="9">
    <source>
        <dbReference type="EMBL" id="AGC79960.1"/>
    </source>
</evidence>
<feature type="chain" id="PRO_0000424284" description="Type II iodothyronine deiodinase">
    <location>
        <begin position="1"/>
        <end position="288"/>
    </location>
</feature>
<feature type="topological domain" description="Lumenal" evidence="2">
    <location>
        <begin position="1"/>
        <end position="5"/>
    </location>
</feature>
<feature type="transmembrane region" description="Helical; Signal-anchor for type III membrane protein" evidence="4">
    <location>
        <begin position="6"/>
        <end position="26"/>
    </location>
</feature>
<feature type="topological domain" description="Cytoplasmic" evidence="2">
    <location>
        <begin position="27"/>
        <end position="288"/>
    </location>
</feature>
<feature type="region of interest" description="Disordered" evidence="6">
    <location>
        <begin position="99"/>
        <end position="130"/>
    </location>
</feature>
<feature type="active site" evidence="1 5">
    <location>
        <position position="160"/>
    </location>
</feature>
<feature type="non-standard amino acid" description="Selenocysteine" evidence="9">
    <location>
        <position position="160"/>
    </location>
</feature>
<proteinExistence type="evidence at transcript level"/>